<accession>P15794</accession>
<accession>Q9XJR7</accession>
<reference key="1">
    <citation type="journal article" date="1999" name="Virology">
        <title>The complete genome sequence of PM2, the first lipid-containing bacterial virus to be isolated.</title>
        <authorList>
            <person name="Maennistoe R.H."/>
            <person name="Kivelae H.M."/>
            <person name="Paulin L."/>
            <person name="Bamford D.H."/>
            <person name="Bamford J.K."/>
        </authorList>
    </citation>
    <scope>NUCLEOTIDE SEQUENCE [GENOMIC DNA]</scope>
</reference>
<reference key="2">
    <citation type="journal article" date="1976" name="Eur. J. Biochem.">
        <title>Structure and synthesis of a lipid-containing bacteriophage. Purification, chemical composition, and partial sequences of the structural proteins.</title>
        <authorList>
            <person name="Hinnen R."/>
            <person name="Chassin R."/>
            <person name="Schaefer R."/>
            <person name="Franklin R.M."/>
            <person name="Hitz H."/>
            <person name="Schaefer D."/>
        </authorList>
    </citation>
    <scope>PROTEIN SEQUENCE OF 1-39</scope>
</reference>
<reference key="3">
    <citation type="journal article" date="1999" name="Virology">
        <title>Purification and protein composition of PM2, the first lipid-containing bacterial virus to be isolated.</title>
        <authorList>
            <person name="Kivelae H.M."/>
            <person name="Maennistoe R.H."/>
            <person name="Kalkkinen N."/>
            <person name="Bamford D.H."/>
        </authorList>
    </citation>
    <scope>PROTEIN SEQUENCE OF 1-10</scope>
</reference>
<reference key="4">
    <citation type="journal article" date="2002" name="J. Virol.">
        <title>Bacteriophage PM2 has a protein capsid surrounding a spherical proteinaceous lipid core.</title>
        <authorList>
            <person name="Kivelae H.M."/>
            <person name="Kalkkinen N."/>
            <person name="Bamford D.H."/>
        </authorList>
    </citation>
    <scope>SUBUNIT</scope>
    <scope>SUBCELLULAR LOCATION</scope>
</reference>
<name>CAPSD_BPPM2</name>
<sequence>MRSFLNLNSIPNVAAGNSCSIKLPIGQTYEVIDLRYSGVTPSQIKNVRVELDGRLLSTYKTLNDLILENTRHKRKIKAGVVSFHFVRPEMKGVNVTDLVQQRMFALGTVGLTTCEIKFDIDEAAAGPKLSAIAQKSVGTAPSWLTMRRNFFKQLNNGTTEIADLPRPVGYRIAAIHIKAAGVDAVEFQIDGTKWRDLLKKADNDYILEQYGKAVLDNTYTIDFMLEGDVYQSVLLDQMIQDLRLKIDSTMDEQAEIIVEYMGVWSRNGF</sequence>
<comment type="function">
    <text>Major capsid protein.</text>
</comment>
<comment type="subunit">
    <text evidence="3">Homotrimer.</text>
</comment>
<comment type="subcellular location">
    <subcellularLocation>
        <location evidence="1">Virion</location>
    </subcellularLocation>
</comment>
<dbReference type="EMBL" id="AF155037">
    <property type="protein sequence ID" value="AAD43549.1"/>
    <property type="molecule type" value="Genomic_DNA"/>
</dbReference>
<dbReference type="PIR" id="A12629">
    <property type="entry name" value="A12629"/>
</dbReference>
<dbReference type="RefSeq" id="NP_049903.1">
    <property type="nucleotide sequence ID" value="NC_000867.1"/>
</dbReference>
<dbReference type="PDB" id="2VVF">
    <property type="method" value="X-ray"/>
    <property type="resolution" value="2.50 A"/>
    <property type="chains" value="A/B/C/D/E/F=1-269"/>
</dbReference>
<dbReference type="PDB" id="2W0C">
    <property type="method" value="X-ray"/>
    <property type="resolution" value="7.00 A"/>
    <property type="chains" value="A/B/C/D/E/F/G/H/I/J=1-269"/>
</dbReference>
<dbReference type="PDBsum" id="2VVF"/>
<dbReference type="PDBsum" id="2W0C"/>
<dbReference type="SMR" id="P15794"/>
<dbReference type="KEGG" id="vg:1262043"/>
<dbReference type="EvolutionaryTrace" id="P15794"/>
<dbReference type="Proteomes" id="UP000002136">
    <property type="component" value="Genome"/>
</dbReference>
<dbReference type="GO" id="GO:0098017">
    <property type="term" value="C:viral capsid, major subunit"/>
    <property type="evidence" value="ECO:0000314"/>
    <property type="project" value="CACAO"/>
</dbReference>
<dbReference type="Gene3D" id="2.60.120.730">
    <property type="match status" value="2"/>
</dbReference>
<dbReference type="InterPro" id="IPR041377">
    <property type="entry name" value="P2_N"/>
</dbReference>
<dbReference type="InterPro" id="IPR053751">
    <property type="entry name" value="Viral_Major_Capsid_sf"/>
</dbReference>
<dbReference type="Pfam" id="PF18628">
    <property type="entry name" value="P2_N"/>
    <property type="match status" value="1"/>
</dbReference>
<feature type="chain" id="PRO_0000089986" description="Major capsid protein P2">
    <location>
        <begin position="1"/>
        <end position="269"/>
    </location>
</feature>
<feature type="sequence variant">
    <original>C</original>
    <variation>R</variation>
    <location>
        <position position="19"/>
    </location>
</feature>
<feature type="sequence conflict" description="In Ref. 2; AA sequence." evidence="2" ref="2">
    <original>S</original>
    <variation>C</variation>
    <location>
        <position position="9"/>
    </location>
</feature>
<feature type="sequence conflict" description="In Ref. 2; AA sequence." evidence="2" ref="2">
    <original>G</original>
    <variation>C</variation>
    <location>
        <position position="16"/>
    </location>
</feature>
<feature type="sequence conflict" description="In Ref. 2; AA sequence." evidence="2" ref="2">
    <original>CS</original>
    <variation>EP</variation>
    <location>
        <begin position="19"/>
        <end position="20"/>
    </location>
</feature>
<feature type="sequence conflict" description="In Ref. 2; AA sequence." evidence="2" ref="2">
    <original>G</original>
    <variation>I</variation>
    <location>
        <position position="38"/>
    </location>
</feature>
<feature type="strand" evidence="4">
    <location>
        <begin position="3"/>
        <end position="6"/>
    </location>
</feature>
<feature type="strand" evidence="4">
    <location>
        <begin position="18"/>
        <end position="23"/>
    </location>
</feature>
<feature type="strand" evidence="4">
    <location>
        <begin position="25"/>
        <end position="39"/>
    </location>
</feature>
<feature type="helix" evidence="4">
    <location>
        <begin position="41"/>
        <end position="43"/>
    </location>
</feature>
<feature type="strand" evidence="4">
    <location>
        <begin position="44"/>
        <end position="51"/>
    </location>
</feature>
<feature type="strand" evidence="4">
    <location>
        <begin position="54"/>
        <end position="61"/>
    </location>
</feature>
<feature type="helix" evidence="4">
    <location>
        <begin position="63"/>
        <end position="71"/>
    </location>
</feature>
<feature type="strand" evidence="4">
    <location>
        <begin position="80"/>
        <end position="84"/>
    </location>
</feature>
<feature type="strand" evidence="4">
    <location>
        <begin position="93"/>
        <end position="95"/>
    </location>
</feature>
<feature type="helix" evidence="4">
    <location>
        <begin position="97"/>
        <end position="102"/>
    </location>
</feature>
<feature type="strand" evidence="4">
    <location>
        <begin position="105"/>
        <end position="107"/>
    </location>
</feature>
<feature type="strand" evidence="4">
    <location>
        <begin position="114"/>
        <end position="120"/>
    </location>
</feature>
<feature type="strand" evidence="4">
    <location>
        <begin position="128"/>
        <end position="137"/>
    </location>
</feature>
<feature type="strand" evidence="4">
    <location>
        <begin position="143"/>
        <end position="154"/>
    </location>
</feature>
<feature type="strand" evidence="4">
    <location>
        <begin position="156"/>
        <end position="161"/>
    </location>
</feature>
<feature type="strand" evidence="4">
    <location>
        <begin position="171"/>
        <end position="178"/>
    </location>
</feature>
<feature type="strand" evidence="4">
    <location>
        <begin position="180"/>
        <end position="189"/>
    </location>
</feature>
<feature type="strand" evidence="4">
    <location>
        <begin position="192"/>
        <end position="199"/>
    </location>
</feature>
<feature type="helix" evidence="4">
    <location>
        <begin position="200"/>
        <end position="209"/>
    </location>
</feature>
<feature type="strand" evidence="4">
    <location>
        <begin position="218"/>
        <end position="223"/>
    </location>
</feature>
<feature type="helix" evidence="4">
    <location>
        <begin position="229"/>
        <end position="231"/>
    </location>
</feature>
<feature type="strand" evidence="4">
    <location>
        <begin position="232"/>
        <end position="234"/>
    </location>
</feature>
<feature type="strand" evidence="4">
    <location>
        <begin position="242"/>
        <end position="250"/>
    </location>
</feature>
<feature type="strand" evidence="4">
    <location>
        <begin position="252"/>
        <end position="263"/>
    </location>
</feature>
<gene>
    <name type="primary">II</name>
</gene>
<organism>
    <name type="scientific">Pseudoalteromonas phage PM2</name>
    <name type="common">Bacteriophage PM2</name>
    <dbReference type="NCBI Taxonomy" id="2905728"/>
    <lineage>
        <taxon>Viruses</taxon>
        <taxon>Varidnaviria</taxon>
        <taxon>Bamfordvirae</taxon>
        <taxon>Preplasmiviricota</taxon>
        <taxon>Tectiliviricetes</taxon>
        <taxon>Vinavirales</taxon>
        <taxon>Corticoviridae</taxon>
        <taxon>Corticovirus</taxon>
        <taxon>Corticovirus PM2</taxon>
    </lineage>
</organism>
<keyword id="KW-0002">3D-structure</keyword>
<keyword id="KW-0167">Capsid protein</keyword>
<keyword id="KW-0903">Direct protein sequencing</keyword>
<keyword id="KW-1185">Reference proteome</keyword>
<keyword id="KW-0946">Virion</keyword>
<proteinExistence type="evidence at protein level"/>
<evidence type="ECO:0000269" key="1">
    <source>
    </source>
</evidence>
<evidence type="ECO:0000305" key="2"/>
<evidence type="ECO:0000305" key="3">
    <source>
    </source>
</evidence>
<evidence type="ECO:0007829" key="4">
    <source>
        <dbReference type="PDB" id="2VVF"/>
    </source>
</evidence>
<protein>
    <recommendedName>
        <fullName>Major capsid protein P2</fullName>
        <shortName>Protein II</shortName>
    </recommendedName>
</protein>
<organismHost>
    <name type="scientific">Pseudoalteromonas espejiana</name>
    <dbReference type="NCBI Taxonomy" id="28107"/>
</organismHost>